<comment type="function">
    <text evidence="1">Cell wall formation. Catalyzes the addition of glutamate to the nucleotide precursor UDP-N-acetylmuramoyl-L-alanine (UMA).</text>
</comment>
<comment type="catalytic activity">
    <reaction evidence="1">
        <text>UDP-N-acetyl-alpha-D-muramoyl-L-alanine + D-glutamate + ATP = UDP-N-acetyl-alpha-D-muramoyl-L-alanyl-D-glutamate + ADP + phosphate + H(+)</text>
        <dbReference type="Rhea" id="RHEA:16429"/>
        <dbReference type="ChEBI" id="CHEBI:15378"/>
        <dbReference type="ChEBI" id="CHEBI:29986"/>
        <dbReference type="ChEBI" id="CHEBI:30616"/>
        <dbReference type="ChEBI" id="CHEBI:43474"/>
        <dbReference type="ChEBI" id="CHEBI:83898"/>
        <dbReference type="ChEBI" id="CHEBI:83900"/>
        <dbReference type="ChEBI" id="CHEBI:456216"/>
        <dbReference type="EC" id="6.3.2.9"/>
    </reaction>
</comment>
<comment type="pathway">
    <text evidence="1">Cell wall biogenesis; peptidoglycan biosynthesis.</text>
</comment>
<comment type="subcellular location">
    <subcellularLocation>
        <location evidence="1">Cytoplasm</location>
    </subcellularLocation>
</comment>
<comment type="similarity">
    <text evidence="1">Belongs to the MurCDEF family.</text>
</comment>
<sequence length="438" mass="47062">MVDYQGKKVVIIGLGLTGLSCVDFFIARGVTPRVMDTRINPPGLDQLPESVEQHVGDLNQEWLLDADLIVVSPGMALAHPALSEAAEAGVEIIGDIELFCRENQAPVVAITGSNGKSTVTTLVGEMAKAAGWSVGVGGNIGVPALTLLKQDNQLTVLELSSFQLETTHSLRASAATILNVTEDHTDRYPLGLQQYRAAKLRVYENAKVCIVNADDALTMPVRGADSRCISFGVDVGDYHLNKQQGEIWLRVRGEKVLNTREMKLSGRHNYTNALAALALADAVGIPRASSLKALTTFSGLPHRFQLVLERHGVRWINDSKATNVGSTEAALDGLQVDGTLHLLLGGDGKSADFSGLTRFLQGDRIKVYCFGRDGGQLAALRPDVSQLTETMAQAMALVAKVVLPGDRVLLSPACASLDQFRSFEHRGNEFARLAEELG</sequence>
<feature type="chain" id="PRO_0000109133" description="UDP-N-acetylmuramoylalanine--D-glutamate ligase">
    <location>
        <begin position="1"/>
        <end position="438"/>
    </location>
</feature>
<feature type="binding site" evidence="1">
    <location>
        <begin position="112"/>
        <end position="118"/>
    </location>
    <ligand>
        <name>ATP</name>
        <dbReference type="ChEBI" id="CHEBI:30616"/>
    </ligand>
</feature>
<gene>
    <name evidence="1" type="primary">murD</name>
    <name type="ordered locus">YPTB0686</name>
</gene>
<reference key="1">
    <citation type="journal article" date="2004" name="Proc. Natl. Acad. Sci. U.S.A.">
        <title>Insights into the evolution of Yersinia pestis through whole-genome comparison with Yersinia pseudotuberculosis.</title>
        <authorList>
            <person name="Chain P.S.G."/>
            <person name="Carniel E."/>
            <person name="Larimer F.W."/>
            <person name="Lamerdin J."/>
            <person name="Stoutland P.O."/>
            <person name="Regala W.M."/>
            <person name="Georgescu A.M."/>
            <person name="Vergez L.M."/>
            <person name="Land M.L."/>
            <person name="Motin V.L."/>
            <person name="Brubaker R.R."/>
            <person name="Fowler J."/>
            <person name="Hinnebusch J."/>
            <person name="Marceau M."/>
            <person name="Medigue C."/>
            <person name="Simonet M."/>
            <person name="Chenal-Francisque V."/>
            <person name="Souza B."/>
            <person name="Dacheux D."/>
            <person name="Elliott J.M."/>
            <person name="Derbise A."/>
            <person name="Hauser L.J."/>
            <person name="Garcia E."/>
        </authorList>
    </citation>
    <scope>NUCLEOTIDE SEQUENCE [LARGE SCALE GENOMIC DNA]</scope>
    <source>
        <strain>IP32953</strain>
    </source>
</reference>
<keyword id="KW-0067">ATP-binding</keyword>
<keyword id="KW-0131">Cell cycle</keyword>
<keyword id="KW-0132">Cell division</keyword>
<keyword id="KW-0133">Cell shape</keyword>
<keyword id="KW-0961">Cell wall biogenesis/degradation</keyword>
<keyword id="KW-0963">Cytoplasm</keyword>
<keyword id="KW-0436">Ligase</keyword>
<keyword id="KW-0547">Nucleotide-binding</keyword>
<keyword id="KW-0573">Peptidoglycan synthesis</keyword>
<organism>
    <name type="scientific">Yersinia pseudotuberculosis serotype I (strain IP32953)</name>
    <dbReference type="NCBI Taxonomy" id="273123"/>
    <lineage>
        <taxon>Bacteria</taxon>
        <taxon>Pseudomonadati</taxon>
        <taxon>Pseudomonadota</taxon>
        <taxon>Gammaproteobacteria</taxon>
        <taxon>Enterobacterales</taxon>
        <taxon>Yersiniaceae</taxon>
        <taxon>Yersinia</taxon>
    </lineage>
</organism>
<evidence type="ECO:0000255" key="1">
    <source>
        <dbReference type="HAMAP-Rule" id="MF_00639"/>
    </source>
</evidence>
<proteinExistence type="inferred from homology"/>
<name>MURD_YERPS</name>
<protein>
    <recommendedName>
        <fullName evidence="1">UDP-N-acetylmuramoylalanine--D-glutamate ligase</fullName>
        <ecNumber evidence="1">6.3.2.9</ecNumber>
    </recommendedName>
    <alternativeName>
        <fullName evidence="1">D-glutamic acid-adding enzyme</fullName>
    </alternativeName>
    <alternativeName>
        <fullName evidence="1">UDP-N-acetylmuramoyl-L-alanyl-D-glutamate synthetase</fullName>
    </alternativeName>
</protein>
<accession>Q66EK7</accession>
<dbReference type="EC" id="6.3.2.9" evidence="1"/>
<dbReference type="EMBL" id="BX936398">
    <property type="protein sequence ID" value="CAH19926.1"/>
    <property type="molecule type" value="Genomic_DNA"/>
</dbReference>
<dbReference type="RefSeq" id="WP_011191734.1">
    <property type="nucleotide sequence ID" value="NC_006155.1"/>
</dbReference>
<dbReference type="SMR" id="Q66EK7"/>
<dbReference type="GeneID" id="49787309"/>
<dbReference type="KEGG" id="ypo:BZ17_1869"/>
<dbReference type="KEGG" id="yps:YPTB0686"/>
<dbReference type="PATRIC" id="fig|273123.14.peg.1983"/>
<dbReference type="UniPathway" id="UPA00219"/>
<dbReference type="Proteomes" id="UP000001011">
    <property type="component" value="Chromosome"/>
</dbReference>
<dbReference type="GO" id="GO:0005737">
    <property type="term" value="C:cytoplasm"/>
    <property type="evidence" value="ECO:0007669"/>
    <property type="project" value="UniProtKB-SubCell"/>
</dbReference>
<dbReference type="GO" id="GO:0005524">
    <property type="term" value="F:ATP binding"/>
    <property type="evidence" value="ECO:0007669"/>
    <property type="project" value="UniProtKB-UniRule"/>
</dbReference>
<dbReference type="GO" id="GO:0008764">
    <property type="term" value="F:UDP-N-acetylmuramoylalanine-D-glutamate ligase activity"/>
    <property type="evidence" value="ECO:0007669"/>
    <property type="project" value="UniProtKB-UniRule"/>
</dbReference>
<dbReference type="GO" id="GO:0051301">
    <property type="term" value="P:cell division"/>
    <property type="evidence" value="ECO:0007669"/>
    <property type="project" value="UniProtKB-KW"/>
</dbReference>
<dbReference type="GO" id="GO:0071555">
    <property type="term" value="P:cell wall organization"/>
    <property type="evidence" value="ECO:0007669"/>
    <property type="project" value="UniProtKB-KW"/>
</dbReference>
<dbReference type="GO" id="GO:0009252">
    <property type="term" value="P:peptidoglycan biosynthetic process"/>
    <property type="evidence" value="ECO:0007669"/>
    <property type="project" value="UniProtKB-UniRule"/>
</dbReference>
<dbReference type="GO" id="GO:0008360">
    <property type="term" value="P:regulation of cell shape"/>
    <property type="evidence" value="ECO:0007669"/>
    <property type="project" value="UniProtKB-KW"/>
</dbReference>
<dbReference type="FunFam" id="3.40.1190.10:FF:000002">
    <property type="entry name" value="UDP-N-acetylmuramoylalanine--D-glutamate ligase"/>
    <property type="match status" value="1"/>
</dbReference>
<dbReference type="Gene3D" id="3.90.190.20">
    <property type="entry name" value="Mur ligase, C-terminal domain"/>
    <property type="match status" value="1"/>
</dbReference>
<dbReference type="Gene3D" id="3.40.1190.10">
    <property type="entry name" value="Mur-like, catalytic domain"/>
    <property type="match status" value="1"/>
</dbReference>
<dbReference type="Gene3D" id="3.40.50.720">
    <property type="entry name" value="NAD(P)-binding Rossmann-like Domain"/>
    <property type="match status" value="1"/>
</dbReference>
<dbReference type="HAMAP" id="MF_00639">
    <property type="entry name" value="MurD"/>
    <property type="match status" value="1"/>
</dbReference>
<dbReference type="InterPro" id="IPR036565">
    <property type="entry name" value="Mur-like_cat_sf"/>
</dbReference>
<dbReference type="InterPro" id="IPR004101">
    <property type="entry name" value="Mur_ligase_C"/>
</dbReference>
<dbReference type="InterPro" id="IPR036615">
    <property type="entry name" value="Mur_ligase_C_dom_sf"/>
</dbReference>
<dbReference type="InterPro" id="IPR013221">
    <property type="entry name" value="Mur_ligase_cen"/>
</dbReference>
<dbReference type="InterPro" id="IPR005762">
    <property type="entry name" value="MurD"/>
</dbReference>
<dbReference type="NCBIfam" id="TIGR01087">
    <property type="entry name" value="murD"/>
    <property type="match status" value="1"/>
</dbReference>
<dbReference type="PANTHER" id="PTHR43692">
    <property type="entry name" value="UDP-N-ACETYLMURAMOYLALANINE--D-GLUTAMATE LIGASE"/>
    <property type="match status" value="1"/>
</dbReference>
<dbReference type="PANTHER" id="PTHR43692:SF1">
    <property type="entry name" value="UDP-N-ACETYLMURAMOYLALANINE--D-GLUTAMATE LIGASE"/>
    <property type="match status" value="1"/>
</dbReference>
<dbReference type="Pfam" id="PF02875">
    <property type="entry name" value="Mur_ligase_C"/>
    <property type="match status" value="1"/>
</dbReference>
<dbReference type="Pfam" id="PF08245">
    <property type="entry name" value="Mur_ligase_M"/>
    <property type="match status" value="1"/>
</dbReference>
<dbReference type="Pfam" id="PF21799">
    <property type="entry name" value="MurD-like_N"/>
    <property type="match status" value="1"/>
</dbReference>
<dbReference type="SUPFAM" id="SSF51984">
    <property type="entry name" value="MurCD N-terminal domain"/>
    <property type="match status" value="1"/>
</dbReference>
<dbReference type="SUPFAM" id="SSF53623">
    <property type="entry name" value="MurD-like peptide ligases, catalytic domain"/>
    <property type="match status" value="1"/>
</dbReference>
<dbReference type="SUPFAM" id="SSF53244">
    <property type="entry name" value="MurD-like peptide ligases, peptide-binding domain"/>
    <property type="match status" value="1"/>
</dbReference>